<sequence>MPAEAKKPAPKAGRSRRKSRELVLKGIYLGLMNQKDTSVIIRELADDPDFDRADYEYFRQLLEGVAESIDELDARLAGLLDRQVSELSPIEHAILCIAAYELIHDVTIPYRVAINEGVELAKLYGGTDGHKYVNGVLDKIAAEARPDEFQRGRR</sequence>
<organism>
    <name type="scientific">Methylobacillus flagellatus (strain ATCC 51484 / DSM 6875 / VKM B-1610 / KT)</name>
    <dbReference type="NCBI Taxonomy" id="265072"/>
    <lineage>
        <taxon>Bacteria</taxon>
        <taxon>Pseudomonadati</taxon>
        <taxon>Pseudomonadota</taxon>
        <taxon>Betaproteobacteria</taxon>
        <taxon>Nitrosomonadales</taxon>
        <taxon>Methylophilaceae</taxon>
        <taxon>Methylobacillus</taxon>
    </lineage>
</organism>
<feature type="chain" id="PRO_0000265543" description="Transcription antitermination protein NusB">
    <location>
        <begin position="1"/>
        <end position="154"/>
    </location>
</feature>
<proteinExistence type="inferred from homology"/>
<evidence type="ECO:0000255" key="1">
    <source>
        <dbReference type="HAMAP-Rule" id="MF_00073"/>
    </source>
</evidence>
<gene>
    <name evidence="1" type="primary">nusB</name>
    <name type="ordered locus">Mfla_0493</name>
</gene>
<reference key="1">
    <citation type="submission" date="2006-03" db="EMBL/GenBank/DDBJ databases">
        <title>Complete sequence of Methylobacillus flagellatus KT.</title>
        <authorList>
            <consortium name="US DOE Joint Genome Institute"/>
            <person name="Copeland A."/>
            <person name="Lucas S."/>
            <person name="Lapidus A."/>
            <person name="Barry K."/>
            <person name="Detter J.C."/>
            <person name="Glavina del Rio T."/>
            <person name="Hammon N."/>
            <person name="Israni S."/>
            <person name="Dalin E."/>
            <person name="Tice H."/>
            <person name="Pitluck S."/>
            <person name="Brettin T."/>
            <person name="Bruce D."/>
            <person name="Han C."/>
            <person name="Tapia R."/>
            <person name="Saunders E."/>
            <person name="Gilna P."/>
            <person name="Schmutz J."/>
            <person name="Larimer F."/>
            <person name="Land M."/>
            <person name="Kyrpides N."/>
            <person name="Anderson I."/>
            <person name="Richardson P."/>
        </authorList>
    </citation>
    <scope>NUCLEOTIDE SEQUENCE [LARGE SCALE GENOMIC DNA]</scope>
    <source>
        <strain>ATCC 51484 / DSM 6875 / VKM B-1610 / KT</strain>
    </source>
</reference>
<comment type="function">
    <text evidence="1">Involved in transcription antitermination. Required for transcription of ribosomal RNA (rRNA) genes. Binds specifically to the boxA antiterminator sequence of the ribosomal RNA (rrn) operons.</text>
</comment>
<comment type="similarity">
    <text evidence="1">Belongs to the NusB family.</text>
</comment>
<protein>
    <recommendedName>
        <fullName evidence="1">Transcription antitermination protein NusB</fullName>
    </recommendedName>
    <alternativeName>
        <fullName evidence="1">Antitermination factor NusB</fullName>
    </alternativeName>
</protein>
<keyword id="KW-1185">Reference proteome</keyword>
<keyword id="KW-0694">RNA-binding</keyword>
<keyword id="KW-0804">Transcription</keyword>
<keyword id="KW-0889">Transcription antitermination</keyword>
<keyword id="KW-0805">Transcription regulation</keyword>
<dbReference type="EMBL" id="CP000284">
    <property type="protein sequence ID" value="ABE48763.1"/>
    <property type="molecule type" value="Genomic_DNA"/>
</dbReference>
<dbReference type="SMR" id="Q1H424"/>
<dbReference type="STRING" id="265072.Mfla_0493"/>
<dbReference type="KEGG" id="mfa:Mfla_0493"/>
<dbReference type="eggNOG" id="COG0781">
    <property type="taxonomic scope" value="Bacteria"/>
</dbReference>
<dbReference type="HOGENOM" id="CLU_087843_4_1_4"/>
<dbReference type="Proteomes" id="UP000002440">
    <property type="component" value="Chromosome"/>
</dbReference>
<dbReference type="GO" id="GO:0005829">
    <property type="term" value="C:cytosol"/>
    <property type="evidence" value="ECO:0007669"/>
    <property type="project" value="TreeGrafter"/>
</dbReference>
<dbReference type="GO" id="GO:0003723">
    <property type="term" value="F:RNA binding"/>
    <property type="evidence" value="ECO:0007669"/>
    <property type="project" value="UniProtKB-UniRule"/>
</dbReference>
<dbReference type="GO" id="GO:0006353">
    <property type="term" value="P:DNA-templated transcription termination"/>
    <property type="evidence" value="ECO:0007669"/>
    <property type="project" value="UniProtKB-UniRule"/>
</dbReference>
<dbReference type="GO" id="GO:0031564">
    <property type="term" value="P:transcription antitermination"/>
    <property type="evidence" value="ECO:0007669"/>
    <property type="project" value="UniProtKB-KW"/>
</dbReference>
<dbReference type="Gene3D" id="1.10.940.10">
    <property type="entry name" value="NusB-like"/>
    <property type="match status" value="1"/>
</dbReference>
<dbReference type="HAMAP" id="MF_00073">
    <property type="entry name" value="NusB"/>
    <property type="match status" value="1"/>
</dbReference>
<dbReference type="InterPro" id="IPR035926">
    <property type="entry name" value="NusB-like_sf"/>
</dbReference>
<dbReference type="InterPro" id="IPR011605">
    <property type="entry name" value="NusB_fam"/>
</dbReference>
<dbReference type="InterPro" id="IPR006027">
    <property type="entry name" value="NusB_RsmB_TIM44"/>
</dbReference>
<dbReference type="NCBIfam" id="TIGR01951">
    <property type="entry name" value="nusB"/>
    <property type="match status" value="1"/>
</dbReference>
<dbReference type="PANTHER" id="PTHR11078:SF3">
    <property type="entry name" value="ANTITERMINATION NUSB DOMAIN-CONTAINING PROTEIN"/>
    <property type="match status" value="1"/>
</dbReference>
<dbReference type="PANTHER" id="PTHR11078">
    <property type="entry name" value="N UTILIZATION SUBSTANCE PROTEIN B-RELATED"/>
    <property type="match status" value="1"/>
</dbReference>
<dbReference type="Pfam" id="PF01029">
    <property type="entry name" value="NusB"/>
    <property type="match status" value="1"/>
</dbReference>
<dbReference type="SUPFAM" id="SSF48013">
    <property type="entry name" value="NusB-like"/>
    <property type="match status" value="1"/>
</dbReference>
<name>NUSB_METFK</name>
<accession>Q1H424</accession>